<organism>
    <name type="scientific">Francisella tularensis subsp. holarctica (strain FTNF002-00 / FTA)</name>
    <dbReference type="NCBI Taxonomy" id="458234"/>
    <lineage>
        <taxon>Bacteria</taxon>
        <taxon>Pseudomonadati</taxon>
        <taxon>Pseudomonadota</taxon>
        <taxon>Gammaproteobacteria</taxon>
        <taxon>Thiotrichales</taxon>
        <taxon>Francisellaceae</taxon>
        <taxon>Francisella</taxon>
    </lineage>
</organism>
<evidence type="ECO:0000255" key="1">
    <source>
        <dbReference type="HAMAP-Rule" id="MF_00054"/>
    </source>
</evidence>
<protein>
    <recommendedName>
        <fullName evidence="1">Elongation factor G</fullName>
        <shortName evidence="1">EF-G</shortName>
    </recommendedName>
</protein>
<sequence>MPRNTALEKYRNIGICAHVDAGKTTTTERILFYTGLSHKIGEVHDGAATMDWMEQEQERGITITSAATTTFWSGMDQQFEKHRINIIDTPGHVDFTIEVERSLRVLDGAVVVFCGSSGVEPQSETVWRQANKYGVPRIVFVNKMDRSGADFERVCAQIKTRLKANVVPVQLNIGAEEDFKGVIDLIRMKAIMWNEEDMGLTYELVDIPADLQDRAEELRMEMIEAAAEASEELMEKYLEGGELSEDEIHQGLRARVLNNEIVLAFCGSAFKNKGVQAVLDGVVRYLPAPNQVPAIKCETEDGEPASRPSSDDAPFAALAFKLATDLFVGNLTFIRVYSGVLKSGDAVYNPVKGKKERVGRIVQMHANKRDEIKEVRAGDIAACIGLKDVTTGDTLCDQEDVVILEKMDFPEPVISVAVEPKSKADQEKMSIALGKLAAEDPSFRVKTDEESGQTIISGMGELHLDIIVDRMRREFKVEANVGNPQVAYRETIRSKVEQEAKFVRQSGGRGQYGHVFVRFEPLDEVDENGEAKVFKFVDEVVGGVVPKEYIGSVAKGIEEQLNNGVLAGYPMIGVKATLYDGSYHDVDSSEMAFKIAGSMALKEGAKKANACILEPIMKVEVVTPEDYLGDVMGDLNRRRGIIEGMDENPSGRVINALVPLAEMFGYATNVRSISQGRASFSMEFKKYAEVPNNIADEIIKSRNS</sequence>
<gene>
    <name evidence="1" type="primary">fusA</name>
    <name type="ordered locus">FTA_0250</name>
</gene>
<keyword id="KW-0963">Cytoplasm</keyword>
<keyword id="KW-0251">Elongation factor</keyword>
<keyword id="KW-0342">GTP-binding</keyword>
<keyword id="KW-0547">Nucleotide-binding</keyword>
<keyword id="KW-0648">Protein biosynthesis</keyword>
<dbReference type="EMBL" id="CP000803">
    <property type="protein sequence ID" value="ABU60727.1"/>
    <property type="molecule type" value="Genomic_DNA"/>
</dbReference>
<dbReference type="RefSeq" id="WP_010030786.1">
    <property type="nucleotide sequence ID" value="NC_009749.1"/>
</dbReference>
<dbReference type="SMR" id="A7N9S4"/>
<dbReference type="KEGG" id="fta:FTA_0250"/>
<dbReference type="HOGENOM" id="CLU_002794_4_1_6"/>
<dbReference type="GO" id="GO:0005737">
    <property type="term" value="C:cytoplasm"/>
    <property type="evidence" value="ECO:0007669"/>
    <property type="project" value="UniProtKB-SubCell"/>
</dbReference>
<dbReference type="GO" id="GO:0005525">
    <property type="term" value="F:GTP binding"/>
    <property type="evidence" value="ECO:0007669"/>
    <property type="project" value="UniProtKB-UniRule"/>
</dbReference>
<dbReference type="GO" id="GO:0003924">
    <property type="term" value="F:GTPase activity"/>
    <property type="evidence" value="ECO:0007669"/>
    <property type="project" value="InterPro"/>
</dbReference>
<dbReference type="GO" id="GO:0097216">
    <property type="term" value="F:guanosine tetraphosphate binding"/>
    <property type="evidence" value="ECO:0007669"/>
    <property type="project" value="UniProtKB-ARBA"/>
</dbReference>
<dbReference type="GO" id="GO:0003746">
    <property type="term" value="F:translation elongation factor activity"/>
    <property type="evidence" value="ECO:0007669"/>
    <property type="project" value="UniProtKB-UniRule"/>
</dbReference>
<dbReference type="GO" id="GO:0032790">
    <property type="term" value="P:ribosome disassembly"/>
    <property type="evidence" value="ECO:0007669"/>
    <property type="project" value="TreeGrafter"/>
</dbReference>
<dbReference type="CDD" id="cd01886">
    <property type="entry name" value="EF-G"/>
    <property type="match status" value="1"/>
</dbReference>
<dbReference type="CDD" id="cd16262">
    <property type="entry name" value="EFG_III"/>
    <property type="match status" value="1"/>
</dbReference>
<dbReference type="CDD" id="cd01434">
    <property type="entry name" value="EFG_mtEFG1_IV"/>
    <property type="match status" value="1"/>
</dbReference>
<dbReference type="CDD" id="cd03713">
    <property type="entry name" value="EFG_mtEFG_C"/>
    <property type="match status" value="1"/>
</dbReference>
<dbReference type="CDD" id="cd04088">
    <property type="entry name" value="EFG_mtEFG_II"/>
    <property type="match status" value="1"/>
</dbReference>
<dbReference type="FunFam" id="2.40.30.10:FF:000006">
    <property type="entry name" value="Elongation factor G"/>
    <property type="match status" value="1"/>
</dbReference>
<dbReference type="FunFam" id="3.30.230.10:FF:000003">
    <property type="entry name" value="Elongation factor G"/>
    <property type="match status" value="1"/>
</dbReference>
<dbReference type="FunFam" id="3.30.70.240:FF:000001">
    <property type="entry name" value="Elongation factor G"/>
    <property type="match status" value="1"/>
</dbReference>
<dbReference type="FunFam" id="3.30.70.870:FF:000001">
    <property type="entry name" value="Elongation factor G"/>
    <property type="match status" value="1"/>
</dbReference>
<dbReference type="FunFam" id="3.40.50.300:FF:000029">
    <property type="entry name" value="Elongation factor G"/>
    <property type="match status" value="1"/>
</dbReference>
<dbReference type="Gene3D" id="3.30.230.10">
    <property type="match status" value="1"/>
</dbReference>
<dbReference type="Gene3D" id="3.30.70.240">
    <property type="match status" value="1"/>
</dbReference>
<dbReference type="Gene3D" id="3.30.70.870">
    <property type="entry name" value="Elongation Factor G (Translational Gtpase), domain 3"/>
    <property type="match status" value="1"/>
</dbReference>
<dbReference type="Gene3D" id="3.40.50.300">
    <property type="entry name" value="P-loop containing nucleotide triphosphate hydrolases"/>
    <property type="match status" value="1"/>
</dbReference>
<dbReference type="Gene3D" id="2.40.30.10">
    <property type="entry name" value="Translation factors"/>
    <property type="match status" value="1"/>
</dbReference>
<dbReference type="HAMAP" id="MF_00054_B">
    <property type="entry name" value="EF_G_EF_2_B"/>
    <property type="match status" value="1"/>
</dbReference>
<dbReference type="InterPro" id="IPR041095">
    <property type="entry name" value="EFG_II"/>
</dbReference>
<dbReference type="InterPro" id="IPR009022">
    <property type="entry name" value="EFG_III"/>
</dbReference>
<dbReference type="InterPro" id="IPR035647">
    <property type="entry name" value="EFG_III/V"/>
</dbReference>
<dbReference type="InterPro" id="IPR047872">
    <property type="entry name" value="EFG_IV"/>
</dbReference>
<dbReference type="InterPro" id="IPR035649">
    <property type="entry name" value="EFG_V"/>
</dbReference>
<dbReference type="InterPro" id="IPR000640">
    <property type="entry name" value="EFG_V-like"/>
</dbReference>
<dbReference type="InterPro" id="IPR004161">
    <property type="entry name" value="EFTu-like_2"/>
</dbReference>
<dbReference type="InterPro" id="IPR031157">
    <property type="entry name" value="G_TR_CS"/>
</dbReference>
<dbReference type="InterPro" id="IPR027417">
    <property type="entry name" value="P-loop_NTPase"/>
</dbReference>
<dbReference type="InterPro" id="IPR020568">
    <property type="entry name" value="Ribosomal_Su5_D2-typ_SF"/>
</dbReference>
<dbReference type="InterPro" id="IPR014721">
    <property type="entry name" value="Ribsml_uS5_D2-typ_fold_subgr"/>
</dbReference>
<dbReference type="InterPro" id="IPR005225">
    <property type="entry name" value="Small_GTP-bd"/>
</dbReference>
<dbReference type="InterPro" id="IPR000795">
    <property type="entry name" value="T_Tr_GTP-bd_dom"/>
</dbReference>
<dbReference type="InterPro" id="IPR009000">
    <property type="entry name" value="Transl_B-barrel_sf"/>
</dbReference>
<dbReference type="InterPro" id="IPR004540">
    <property type="entry name" value="Transl_elong_EFG/EF2"/>
</dbReference>
<dbReference type="InterPro" id="IPR005517">
    <property type="entry name" value="Transl_elong_EFG/EF2_IV"/>
</dbReference>
<dbReference type="NCBIfam" id="TIGR00484">
    <property type="entry name" value="EF-G"/>
    <property type="match status" value="1"/>
</dbReference>
<dbReference type="NCBIfam" id="NF009381">
    <property type="entry name" value="PRK12740.1-5"/>
    <property type="match status" value="1"/>
</dbReference>
<dbReference type="NCBIfam" id="TIGR00231">
    <property type="entry name" value="small_GTP"/>
    <property type="match status" value="1"/>
</dbReference>
<dbReference type="PANTHER" id="PTHR43261:SF1">
    <property type="entry name" value="RIBOSOME-RELEASING FACTOR 2, MITOCHONDRIAL"/>
    <property type="match status" value="1"/>
</dbReference>
<dbReference type="PANTHER" id="PTHR43261">
    <property type="entry name" value="TRANSLATION ELONGATION FACTOR G-RELATED"/>
    <property type="match status" value="1"/>
</dbReference>
<dbReference type="Pfam" id="PF00679">
    <property type="entry name" value="EFG_C"/>
    <property type="match status" value="1"/>
</dbReference>
<dbReference type="Pfam" id="PF14492">
    <property type="entry name" value="EFG_III"/>
    <property type="match status" value="1"/>
</dbReference>
<dbReference type="Pfam" id="PF03764">
    <property type="entry name" value="EFG_IV"/>
    <property type="match status" value="1"/>
</dbReference>
<dbReference type="Pfam" id="PF00009">
    <property type="entry name" value="GTP_EFTU"/>
    <property type="match status" value="1"/>
</dbReference>
<dbReference type="Pfam" id="PF03144">
    <property type="entry name" value="GTP_EFTU_D2"/>
    <property type="match status" value="1"/>
</dbReference>
<dbReference type="PRINTS" id="PR00315">
    <property type="entry name" value="ELONGATNFCT"/>
</dbReference>
<dbReference type="SMART" id="SM00838">
    <property type="entry name" value="EFG_C"/>
    <property type="match status" value="1"/>
</dbReference>
<dbReference type="SMART" id="SM00889">
    <property type="entry name" value="EFG_IV"/>
    <property type="match status" value="1"/>
</dbReference>
<dbReference type="SUPFAM" id="SSF54980">
    <property type="entry name" value="EF-G C-terminal domain-like"/>
    <property type="match status" value="2"/>
</dbReference>
<dbReference type="SUPFAM" id="SSF52540">
    <property type="entry name" value="P-loop containing nucleoside triphosphate hydrolases"/>
    <property type="match status" value="1"/>
</dbReference>
<dbReference type="SUPFAM" id="SSF54211">
    <property type="entry name" value="Ribosomal protein S5 domain 2-like"/>
    <property type="match status" value="1"/>
</dbReference>
<dbReference type="SUPFAM" id="SSF50447">
    <property type="entry name" value="Translation proteins"/>
    <property type="match status" value="1"/>
</dbReference>
<dbReference type="PROSITE" id="PS00301">
    <property type="entry name" value="G_TR_1"/>
    <property type="match status" value="1"/>
</dbReference>
<dbReference type="PROSITE" id="PS51722">
    <property type="entry name" value="G_TR_2"/>
    <property type="match status" value="1"/>
</dbReference>
<comment type="function">
    <text evidence="1">Catalyzes the GTP-dependent ribosomal translocation step during translation elongation. During this step, the ribosome changes from the pre-translocational (PRE) to the post-translocational (POST) state as the newly formed A-site-bound peptidyl-tRNA and P-site-bound deacylated tRNA move to the P and E sites, respectively. Catalyzes the coordinated movement of the two tRNA molecules, the mRNA and conformational changes in the ribosome.</text>
</comment>
<comment type="subcellular location">
    <subcellularLocation>
        <location evidence="1">Cytoplasm</location>
    </subcellularLocation>
</comment>
<comment type="similarity">
    <text evidence="1">Belongs to the TRAFAC class translation factor GTPase superfamily. Classic translation factor GTPase family. EF-G/EF-2 subfamily.</text>
</comment>
<feature type="chain" id="PRO_1000008825" description="Elongation factor G">
    <location>
        <begin position="1"/>
        <end position="704"/>
    </location>
</feature>
<feature type="domain" description="tr-type G">
    <location>
        <begin position="8"/>
        <end position="290"/>
    </location>
</feature>
<feature type="binding site" evidence="1">
    <location>
        <begin position="17"/>
        <end position="24"/>
    </location>
    <ligand>
        <name>GTP</name>
        <dbReference type="ChEBI" id="CHEBI:37565"/>
    </ligand>
</feature>
<feature type="binding site" evidence="1">
    <location>
        <begin position="88"/>
        <end position="92"/>
    </location>
    <ligand>
        <name>GTP</name>
        <dbReference type="ChEBI" id="CHEBI:37565"/>
    </ligand>
</feature>
<feature type="binding site" evidence="1">
    <location>
        <begin position="142"/>
        <end position="145"/>
    </location>
    <ligand>
        <name>GTP</name>
        <dbReference type="ChEBI" id="CHEBI:37565"/>
    </ligand>
</feature>
<reference key="1">
    <citation type="journal article" date="2009" name="PLoS ONE">
        <title>Complete genome sequence of Francisella tularensis subspecies holarctica FTNF002-00.</title>
        <authorList>
            <person name="Barabote R.D."/>
            <person name="Xie G."/>
            <person name="Brettin T.S."/>
            <person name="Hinrichs S.H."/>
            <person name="Fey P.D."/>
            <person name="Jay J.J."/>
            <person name="Engle J.L."/>
            <person name="Godbole S.D."/>
            <person name="Noronha J.M."/>
            <person name="Scheuermann R.H."/>
            <person name="Zhou L.W."/>
            <person name="Lion C."/>
            <person name="Dempsey M.P."/>
        </authorList>
    </citation>
    <scope>NUCLEOTIDE SEQUENCE [LARGE SCALE GENOMIC DNA]</scope>
    <source>
        <strain>FTNF002-00 / FTA</strain>
    </source>
</reference>
<accession>A7N9S4</accession>
<name>EFG_FRATF</name>
<proteinExistence type="inferred from homology"/>